<sequence length="9" mass="989">GPESAFLRL</sequence>
<comment type="function">
    <text evidence="1">FMRFamides and FMRFamide-like peptides are neuropeptides.</text>
</comment>
<comment type="subcellular location">
    <subcellularLocation>
        <location evidence="6">Secreted</location>
    </subcellularLocation>
</comment>
<comment type="similarity">
    <text evidence="2">Belongs to the FARP (FMRF amide related peptide) family.</text>
</comment>
<accession>B3A0J8</accession>
<dbReference type="GO" id="GO:0005576">
    <property type="term" value="C:extracellular region"/>
    <property type="evidence" value="ECO:0007669"/>
    <property type="project" value="UniProtKB-SubCell"/>
</dbReference>
<dbReference type="GO" id="GO:0007218">
    <property type="term" value="P:neuropeptide signaling pathway"/>
    <property type="evidence" value="ECO:0007669"/>
    <property type="project" value="UniProtKB-KW"/>
</dbReference>
<organism>
    <name type="scientific">Pachyphasma brandbergense</name>
    <name type="common">Gladiator</name>
    <name type="synonym">Heel-walker</name>
    <dbReference type="NCBI Taxonomy" id="1041430"/>
    <lineage>
        <taxon>Eukaryota</taxon>
        <taxon>Metazoa</taxon>
        <taxon>Ecdysozoa</taxon>
        <taxon>Arthropoda</taxon>
        <taxon>Hexapoda</taxon>
        <taxon>Insecta</taxon>
        <taxon>Pterygota</taxon>
        <taxon>Neoptera</taxon>
        <taxon>Polyneoptera</taxon>
        <taxon>Mantophasmatodea</taxon>
        <taxon>Mantophasmatidae</taxon>
        <taxon>Pachyphasma</taxon>
    </lineage>
</organism>
<name>FAR3_PACBA</name>
<protein>
    <recommendedName>
        <fullName evidence="4">Extended FMRFamide-3</fullName>
        <shortName evidence="4">FMRFa-3</shortName>
    </recommendedName>
</protein>
<evidence type="ECO:0000250" key="1">
    <source>
        <dbReference type="UniProtKB" id="P34405"/>
    </source>
</evidence>
<evidence type="ECO:0000255" key="2"/>
<evidence type="ECO:0000269" key="3">
    <source>
    </source>
</evidence>
<evidence type="ECO:0000303" key="4">
    <source>
    </source>
</evidence>
<evidence type="ECO:0000305" key="5"/>
<evidence type="ECO:0000305" key="6">
    <source>
    </source>
</evidence>
<keyword id="KW-0027">Amidation</keyword>
<keyword id="KW-0903">Direct protein sequencing</keyword>
<keyword id="KW-0527">Neuropeptide</keyword>
<keyword id="KW-0964">Secreted</keyword>
<reference evidence="5" key="1">
    <citation type="journal article" date="2012" name="Syst. Biol.">
        <title>Peptidomics-based phylogeny and biogeography of Mantophasmatodea (Hexapoda).</title>
        <authorList>
            <person name="Predel R."/>
            <person name="Neupert S."/>
            <person name="Huetteroth W."/>
            <person name="Kahnt J."/>
            <person name="Waidelich D."/>
            <person name="Roth S."/>
        </authorList>
    </citation>
    <scope>PROTEIN SEQUENCE</scope>
    <scope>AMIDATION AT LEU-9</scope>
    <source>
        <tissue evidence="3">Thoracic perisympathetic organs</tissue>
    </source>
</reference>
<feature type="peptide" id="PRO_0000421499" description="Extended FMRFamide-3" evidence="3">
    <location>
        <begin position="1"/>
        <end position="9"/>
    </location>
</feature>
<feature type="modified residue" description="Leucine amide" evidence="3">
    <location>
        <position position="9"/>
    </location>
</feature>
<feature type="unsure residue" description="L or I" evidence="3">
    <location>
        <position position="7"/>
    </location>
</feature>
<feature type="unsure residue" description="L or I" evidence="3">
    <location>
        <position position="9"/>
    </location>
</feature>
<proteinExistence type="evidence at protein level"/>